<protein>
    <recommendedName>
        <fullName evidence="1">Signal recognition particle 54 kDa protein</fullName>
        <shortName evidence="1">SRP54</shortName>
        <ecNumber evidence="1">3.6.5.4</ecNumber>
    </recommendedName>
</protein>
<reference key="1">
    <citation type="journal article" date="2009" name="Stand. Genomic Sci.">
        <title>Complete genome sequence of Methanocorpusculum labreanum type strain Z.</title>
        <authorList>
            <person name="Anderson I.J."/>
            <person name="Sieprawska-Lupa M."/>
            <person name="Goltsman E."/>
            <person name="Lapidus A."/>
            <person name="Copeland A."/>
            <person name="Glavina Del Rio T."/>
            <person name="Tice H."/>
            <person name="Dalin E."/>
            <person name="Barry K."/>
            <person name="Pitluck S."/>
            <person name="Hauser L."/>
            <person name="Land M."/>
            <person name="Lucas S."/>
            <person name="Richardson P."/>
            <person name="Whitman W.B."/>
            <person name="Kyrpides N.C."/>
        </authorList>
    </citation>
    <scope>NUCLEOTIDE SEQUENCE [LARGE SCALE GENOMIC DNA]</scope>
    <source>
        <strain>ATCC 43576 / DSM 4855 / Z</strain>
    </source>
</reference>
<dbReference type="EC" id="3.6.5.4" evidence="1"/>
<dbReference type="EMBL" id="CP000559">
    <property type="protein sequence ID" value="ABN07639.1"/>
    <property type="molecule type" value="Genomic_DNA"/>
</dbReference>
<dbReference type="RefSeq" id="WP_011833842.1">
    <property type="nucleotide sequence ID" value="NC_008942.1"/>
</dbReference>
<dbReference type="SMR" id="A2STI3"/>
<dbReference type="STRING" id="410358.Mlab_1474"/>
<dbReference type="GeneID" id="4795584"/>
<dbReference type="KEGG" id="mla:Mlab_1474"/>
<dbReference type="eggNOG" id="arCOG01228">
    <property type="taxonomic scope" value="Archaea"/>
</dbReference>
<dbReference type="HOGENOM" id="CLU_009301_6_0_2"/>
<dbReference type="OrthoDB" id="52849at2157"/>
<dbReference type="Proteomes" id="UP000000365">
    <property type="component" value="Chromosome"/>
</dbReference>
<dbReference type="GO" id="GO:0048500">
    <property type="term" value="C:signal recognition particle"/>
    <property type="evidence" value="ECO:0007669"/>
    <property type="project" value="UniProtKB-UniRule"/>
</dbReference>
<dbReference type="GO" id="GO:0008312">
    <property type="term" value="F:7S RNA binding"/>
    <property type="evidence" value="ECO:0007669"/>
    <property type="project" value="UniProtKB-UniRule"/>
</dbReference>
<dbReference type="GO" id="GO:0016887">
    <property type="term" value="F:ATP hydrolysis activity"/>
    <property type="evidence" value="ECO:0007669"/>
    <property type="project" value="InterPro"/>
</dbReference>
<dbReference type="GO" id="GO:0005525">
    <property type="term" value="F:GTP binding"/>
    <property type="evidence" value="ECO:0007669"/>
    <property type="project" value="UniProtKB-UniRule"/>
</dbReference>
<dbReference type="GO" id="GO:0003924">
    <property type="term" value="F:GTPase activity"/>
    <property type="evidence" value="ECO:0007669"/>
    <property type="project" value="UniProtKB-UniRule"/>
</dbReference>
<dbReference type="GO" id="GO:0006614">
    <property type="term" value="P:SRP-dependent cotranslational protein targeting to membrane"/>
    <property type="evidence" value="ECO:0007669"/>
    <property type="project" value="InterPro"/>
</dbReference>
<dbReference type="CDD" id="cd17875">
    <property type="entry name" value="SRP54_G"/>
    <property type="match status" value="1"/>
</dbReference>
<dbReference type="Gene3D" id="3.40.50.300">
    <property type="entry name" value="P-loop containing nucleotide triphosphate hydrolases"/>
    <property type="match status" value="1"/>
</dbReference>
<dbReference type="Gene3D" id="1.20.120.140">
    <property type="entry name" value="Signal recognition particle SRP54, nucleotide-binding domain"/>
    <property type="match status" value="1"/>
</dbReference>
<dbReference type="Gene3D" id="1.10.260.30">
    <property type="entry name" value="Signal recognition particle, SRP54 subunit, M-domain"/>
    <property type="match status" value="1"/>
</dbReference>
<dbReference type="HAMAP" id="MF_00306">
    <property type="entry name" value="SRP54"/>
    <property type="match status" value="1"/>
</dbReference>
<dbReference type="InterPro" id="IPR003593">
    <property type="entry name" value="AAA+_ATPase"/>
</dbReference>
<dbReference type="InterPro" id="IPR027417">
    <property type="entry name" value="P-loop_NTPase"/>
</dbReference>
<dbReference type="InterPro" id="IPR036891">
    <property type="entry name" value="Signal_recog_part_SRP54_M_sf"/>
</dbReference>
<dbReference type="InterPro" id="IPR013822">
    <property type="entry name" value="Signal_recog_particl_SRP54_hlx"/>
</dbReference>
<dbReference type="InterPro" id="IPR004125">
    <property type="entry name" value="Signal_recog_particle_SRP54_M"/>
</dbReference>
<dbReference type="InterPro" id="IPR036225">
    <property type="entry name" value="SRP/SRP_N"/>
</dbReference>
<dbReference type="InterPro" id="IPR022941">
    <property type="entry name" value="SRP54"/>
</dbReference>
<dbReference type="InterPro" id="IPR000897">
    <property type="entry name" value="SRP54_GTPase_dom"/>
</dbReference>
<dbReference type="InterPro" id="IPR042101">
    <property type="entry name" value="SRP54_N_sf"/>
</dbReference>
<dbReference type="PANTHER" id="PTHR11564">
    <property type="entry name" value="SIGNAL RECOGNITION PARTICLE 54K PROTEIN SRP54"/>
    <property type="match status" value="1"/>
</dbReference>
<dbReference type="PANTHER" id="PTHR11564:SF5">
    <property type="entry name" value="SIGNAL RECOGNITION PARTICLE SUBUNIT SRP54"/>
    <property type="match status" value="1"/>
</dbReference>
<dbReference type="Pfam" id="PF00448">
    <property type="entry name" value="SRP54"/>
    <property type="match status" value="1"/>
</dbReference>
<dbReference type="Pfam" id="PF02881">
    <property type="entry name" value="SRP54_N"/>
    <property type="match status" value="1"/>
</dbReference>
<dbReference type="Pfam" id="PF02978">
    <property type="entry name" value="SRP_SPB"/>
    <property type="match status" value="1"/>
</dbReference>
<dbReference type="SMART" id="SM00382">
    <property type="entry name" value="AAA"/>
    <property type="match status" value="1"/>
</dbReference>
<dbReference type="SMART" id="SM00962">
    <property type="entry name" value="SRP54"/>
    <property type="match status" value="1"/>
</dbReference>
<dbReference type="SMART" id="SM00963">
    <property type="entry name" value="SRP54_N"/>
    <property type="match status" value="1"/>
</dbReference>
<dbReference type="SUPFAM" id="SSF47364">
    <property type="entry name" value="Domain of the SRP/SRP receptor G-proteins"/>
    <property type="match status" value="1"/>
</dbReference>
<dbReference type="SUPFAM" id="SSF52540">
    <property type="entry name" value="P-loop containing nucleoside triphosphate hydrolases"/>
    <property type="match status" value="1"/>
</dbReference>
<dbReference type="SUPFAM" id="SSF47446">
    <property type="entry name" value="Signal peptide-binding domain"/>
    <property type="match status" value="1"/>
</dbReference>
<name>SRP54_METLZ</name>
<keyword id="KW-0963">Cytoplasm</keyword>
<keyword id="KW-0342">GTP-binding</keyword>
<keyword id="KW-0378">Hydrolase</keyword>
<keyword id="KW-0547">Nucleotide-binding</keyword>
<keyword id="KW-1185">Reference proteome</keyword>
<keyword id="KW-0687">Ribonucleoprotein</keyword>
<keyword id="KW-0694">RNA-binding</keyword>
<keyword id="KW-0733">Signal recognition particle</keyword>
<feature type="chain" id="PRO_1000022786" description="Signal recognition particle 54 kDa protein">
    <location>
        <begin position="1"/>
        <end position="446"/>
    </location>
</feature>
<feature type="binding site" evidence="1">
    <location>
        <begin position="104"/>
        <end position="111"/>
    </location>
    <ligand>
        <name>GTP</name>
        <dbReference type="ChEBI" id="CHEBI:37565"/>
    </ligand>
</feature>
<feature type="binding site" evidence="1">
    <location>
        <begin position="184"/>
        <end position="188"/>
    </location>
    <ligand>
        <name>GTP</name>
        <dbReference type="ChEBI" id="CHEBI:37565"/>
    </ligand>
</feature>
<feature type="binding site" evidence="1">
    <location>
        <begin position="242"/>
        <end position="245"/>
    </location>
    <ligand>
        <name>GTP</name>
        <dbReference type="ChEBI" id="CHEBI:37565"/>
    </ligand>
</feature>
<proteinExistence type="inferred from homology"/>
<evidence type="ECO:0000255" key="1">
    <source>
        <dbReference type="HAMAP-Rule" id="MF_00306"/>
    </source>
</evidence>
<accession>A2STI3</accession>
<organism>
    <name type="scientific">Methanocorpusculum labreanum (strain ATCC 43576 / DSM 4855 / Z)</name>
    <dbReference type="NCBI Taxonomy" id="410358"/>
    <lineage>
        <taxon>Archaea</taxon>
        <taxon>Methanobacteriati</taxon>
        <taxon>Methanobacteriota</taxon>
        <taxon>Stenosarchaea group</taxon>
        <taxon>Methanomicrobia</taxon>
        <taxon>Methanomicrobiales</taxon>
        <taxon>Methanocorpusculaceae</taxon>
        <taxon>Methanocorpusculum</taxon>
    </lineage>
</organism>
<comment type="function">
    <text evidence="1">Involved in targeting and insertion of nascent membrane proteins into the cytoplasmic membrane. Binds to the hydrophobic signal sequence of the ribosome-nascent chain (RNC) as it emerges from the ribosomes. The SRP-RNC complex is then targeted to the cytoplasmic membrane where it interacts with the SRP receptor FtsY.</text>
</comment>
<comment type="catalytic activity">
    <reaction evidence="1">
        <text>GTP + H2O = GDP + phosphate + H(+)</text>
        <dbReference type="Rhea" id="RHEA:19669"/>
        <dbReference type="ChEBI" id="CHEBI:15377"/>
        <dbReference type="ChEBI" id="CHEBI:15378"/>
        <dbReference type="ChEBI" id="CHEBI:37565"/>
        <dbReference type="ChEBI" id="CHEBI:43474"/>
        <dbReference type="ChEBI" id="CHEBI:58189"/>
        <dbReference type="EC" id="3.6.5.4"/>
    </reaction>
</comment>
<comment type="subunit">
    <text evidence="1">Part of the signal recognition particle protein translocation system, which is composed of SRP and FtsY. Archaeal SRP consists of a 7S RNA molecule of 300 nucleotides and two protein subunits: SRP54 and SRP19.</text>
</comment>
<comment type="subcellular location">
    <subcellularLocation>
        <location evidence="1">Cytoplasm</location>
    </subcellularLocation>
    <text evidence="1">The SRP-RNC complex is targeted to the cytoplasmic membrane.</text>
</comment>
<comment type="domain">
    <text evidence="1">Composed of three domains: the N-terminal N domain, which is responsible for interactions with the ribosome, the central G domain, which binds GTP, and the C-terminal M domain, which binds the RNA and the signal sequence of the RNC.</text>
</comment>
<comment type="similarity">
    <text evidence="1">Belongs to the GTP-binding SRP family. SRP54 subfamily.</text>
</comment>
<gene>
    <name evidence="1" type="primary">srp54</name>
    <name type="ordered locus">Mlab_1474</name>
</gene>
<sequence>MGLDTLSNSLKDAMKKLAGKTVIDRAAVDELVRDLQRALLSSDVNVKLVMELSKQIKARSLDEDLPKGINAREHVLRIVYQELVNLVGKEAEFSLKPQKILMAGLQGSGKTTTTGKLCRYFQRKGLKVGAIGADNFRPGAYAQLETLCKKINVPSYGDPKEKDAVKIVKDGLAALKDVDVIIVDTAGRHALEDDLIDEITQVNAYLNPDHRWLVIDAALGQAARDQAKRFHEAIGIDGVIVTKMDGTAKGGGAMSAVAETQSGIVFIGNGETIDDLERFDPNGFISRLLGMGDLKALVEKAEESMNAEDVDVNAMLRGKFTLNDMYKQLEAVQKMGPLKQVLSMLPMGNMNVPSDALEGTADKMKKFRIIMDSMTPQELDEPALINTSRMIRVAKGSGSSVEEVRDLIKYYKMMQKTLKGFRGNRMAMGKMMKQMQKGGMGPMGPM</sequence>